<reference key="1">
    <citation type="journal article" date="1998" name="Virus Genes">
        <title>Nucleotide and predicted amino acid sequences of all genes encoded by the 3' genomic portion (9.5 kb) of respiratory bovine coronaviruses and comparisons among respiratory and enteric coronaviruses.</title>
        <authorList>
            <person name="Chouljenko V.N."/>
            <person name="Kousoulas K.G."/>
            <person name="Lin X.Q."/>
            <person name="Storz J."/>
        </authorList>
    </citation>
    <scope>NUCLEOTIDE SEQUENCE [GENOMIC RNA]</scope>
</reference>
<dbReference type="EMBL" id="AF058942">
    <property type="protein sequence ID" value="AAF25500.1"/>
    <property type="molecule type" value="Genomic_RNA"/>
</dbReference>
<dbReference type="InterPro" id="IPR009314">
    <property type="entry name" value="Corona_NS1"/>
</dbReference>
<dbReference type="Pfam" id="PF06145">
    <property type="entry name" value="Corona_NS1"/>
    <property type="match status" value="1"/>
</dbReference>
<proteinExistence type="inferred from homology"/>
<name>NS49_CVBLY</name>
<gene>
    <name type="ORF">4a</name>
</gene>
<feature type="chain" id="PRO_0000283942" description="Non-structural protein of 4.9 kDa">
    <location>
        <begin position="1"/>
        <end position="44"/>
    </location>
</feature>
<organism>
    <name type="scientific">Bovine coronavirus (strain LY-138)</name>
    <name type="common">BCoV</name>
    <name type="synonym">BCV</name>
    <dbReference type="NCBI Taxonomy" id="11131"/>
    <lineage>
        <taxon>Viruses</taxon>
        <taxon>Riboviria</taxon>
        <taxon>Orthornavirae</taxon>
        <taxon>Pisuviricota</taxon>
        <taxon>Pisoniviricetes</taxon>
        <taxon>Nidovirales</taxon>
        <taxon>Cornidovirineae</taxon>
        <taxon>Coronaviridae</taxon>
        <taxon>Orthocoronavirinae</taxon>
        <taxon>Betacoronavirus</taxon>
        <taxon>Embecovirus</taxon>
        <taxon>Betacoronavirus 1</taxon>
    </lineage>
</organism>
<accession>Q9QAS1</accession>
<organismHost>
    <name type="scientific">Bos taurus</name>
    <name type="common">Bovine</name>
    <dbReference type="NCBI Taxonomy" id="9913"/>
</organismHost>
<protein>
    <recommendedName>
        <fullName>Non-structural protein of 4.9 kDa</fullName>
        <shortName>ns4.9</shortName>
    </recommendedName>
    <alternativeName>
        <fullName>4.9 kDa accessory protein</fullName>
    </alternativeName>
</protein>
<comment type="similarity">
    <text evidence="1">Belongs to the coronaviruses ns4.9 protein family.</text>
</comment>
<sequence>MTTKFVFDLLAPDDILHPFNHVKLIIIRPIEVEHIIIATTMPAV</sequence>
<evidence type="ECO:0000305" key="1"/>